<protein>
    <recommendedName>
        <fullName evidence="1">Cell division protein ZapB</fullName>
    </recommendedName>
</protein>
<organism>
    <name type="scientific">Salmonella dublin (strain CT_02021853)</name>
    <dbReference type="NCBI Taxonomy" id="439851"/>
    <lineage>
        <taxon>Bacteria</taxon>
        <taxon>Pseudomonadati</taxon>
        <taxon>Pseudomonadota</taxon>
        <taxon>Gammaproteobacteria</taxon>
        <taxon>Enterobacterales</taxon>
        <taxon>Enterobacteriaceae</taxon>
        <taxon>Salmonella</taxon>
    </lineage>
</organism>
<sequence length="79" mass="9312">MSLEVFEKLEAKVQQAIDTITLLQMEIEELKEKNNSLTQEVQSAQHQREELERENNSLKEQQSGWQERLQALLGRMEEV</sequence>
<gene>
    <name evidence="1" type="primary">zapB</name>
    <name type="ordered locus">SeD_A4487</name>
</gene>
<evidence type="ECO:0000255" key="1">
    <source>
        <dbReference type="HAMAP-Rule" id="MF_01196"/>
    </source>
</evidence>
<evidence type="ECO:0000256" key="2">
    <source>
        <dbReference type="SAM" id="MobiDB-lite"/>
    </source>
</evidence>
<name>ZAPB_SALDC</name>
<dbReference type="EMBL" id="CP001144">
    <property type="protein sequence ID" value="ACH74157.1"/>
    <property type="molecule type" value="Genomic_DNA"/>
</dbReference>
<dbReference type="RefSeq" id="WP_000051370.1">
    <property type="nucleotide sequence ID" value="NC_011205.1"/>
</dbReference>
<dbReference type="SMR" id="B5FPT6"/>
<dbReference type="KEGG" id="sed:SeD_A4487"/>
<dbReference type="HOGENOM" id="CLU_171174_2_0_6"/>
<dbReference type="Proteomes" id="UP000008322">
    <property type="component" value="Chromosome"/>
</dbReference>
<dbReference type="GO" id="GO:0005737">
    <property type="term" value="C:cytoplasm"/>
    <property type="evidence" value="ECO:0007669"/>
    <property type="project" value="UniProtKB-SubCell"/>
</dbReference>
<dbReference type="GO" id="GO:0000917">
    <property type="term" value="P:division septum assembly"/>
    <property type="evidence" value="ECO:0007669"/>
    <property type="project" value="UniProtKB-KW"/>
</dbReference>
<dbReference type="GO" id="GO:0043093">
    <property type="term" value="P:FtsZ-dependent cytokinesis"/>
    <property type="evidence" value="ECO:0007669"/>
    <property type="project" value="UniProtKB-UniRule"/>
</dbReference>
<dbReference type="FunFam" id="1.20.5.340:FF:000014">
    <property type="entry name" value="Cell division protein ZapB"/>
    <property type="match status" value="1"/>
</dbReference>
<dbReference type="Gene3D" id="1.20.5.340">
    <property type="match status" value="1"/>
</dbReference>
<dbReference type="HAMAP" id="MF_01196">
    <property type="entry name" value="ZapB"/>
    <property type="match status" value="1"/>
</dbReference>
<dbReference type="InterPro" id="IPR009252">
    <property type="entry name" value="Cell_div_ZapB"/>
</dbReference>
<dbReference type="NCBIfam" id="NF011951">
    <property type="entry name" value="PRK15422.1"/>
    <property type="match status" value="1"/>
</dbReference>
<dbReference type="Pfam" id="PF06005">
    <property type="entry name" value="ZapB"/>
    <property type="match status" value="1"/>
</dbReference>
<accession>B5FPT6</accession>
<feature type="chain" id="PRO_1000138444" description="Cell division protein ZapB">
    <location>
        <begin position="1"/>
        <end position="79"/>
    </location>
</feature>
<feature type="region of interest" description="Disordered" evidence="2">
    <location>
        <begin position="36"/>
        <end position="63"/>
    </location>
</feature>
<feature type="coiled-coil region" evidence="1">
    <location>
        <begin position="3"/>
        <end position="79"/>
    </location>
</feature>
<feature type="compositionally biased region" description="Polar residues" evidence="2">
    <location>
        <begin position="36"/>
        <end position="45"/>
    </location>
</feature>
<feature type="compositionally biased region" description="Basic and acidic residues" evidence="2">
    <location>
        <begin position="46"/>
        <end position="57"/>
    </location>
</feature>
<comment type="function">
    <text evidence="1">Non-essential, abundant cell division factor that is required for proper Z-ring formation. It is recruited early to the divisome by direct interaction with FtsZ, stimulating Z-ring assembly and thereby promoting cell division earlier in the cell cycle. Its recruitment to the Z-ring requires functional FtsA or ZipA.</text>
</comment>
<comment type="subunit">
    <text evidence="1">Homodimer. The ends of the coiled-coil dimer bind to each other, forming polymers. Interacts with FtsZ.</text>
</comment>
<comment type="subcellular location">
    <subcellularLocation>
        <location evidence="1">Cytoplasm</location>
    </subcellularLocation>
    <text evidence="1">Localizes to the septum at mid-cell, in a FtsZ-like pattern.</text>
</comment>
<comment type="similarity">
    <text evidence="1">Belongs to the ZapB family.</text>
</comment>
<keyword id="KW-0131">Cell cycle</keyword>
<keyword id="KW-0132">Cell division</keyword>
<keyword id="KW-0175">Coiled coil</keyword>
<keyword id="KW-0963">Cytoplasm</keyword>
<keyword id="KW-0717">Septation</keyword>
<reference key="1">
    <citation type="journal article" date="2011" name="J. Bacteriol.">
        <title>Comparative genomics of 28 Salmonella enterica isolates: evidence for CRISPR-mediated adaptive sublineage evolution.</title>
        <authorList>
            <person name="Fricke W.F."/>
            <person name="Mammel M.K."/>
            <person name="McDermott P.F."/>
            <person name="Tartera C."/>
            <person name="White D.G."/>
            <person name="Leclerc J.E."/>
            <person name="Ravel J."/>
            <person name="Cebula T.A."/>
        </authorList>
    </citation>
    <scope>NUCLEOTIDE SEQUENCE [LARGE SCALE GENOMIC DNA]</scope>
    <source>
        <strain>CT_02021853</strain>
    </source>
</reference>
<proteinExistence type="inferred from homology"/>